<reference key="1">
    <citation type="journal article" date="2000" name="Curr. Plant Sci. Biotechnol. Agric.">
        <title>Two subclasses of yellow lupin PR10 proteins and their possible function during the symbiosis development.</title>
        <authorList>
            <person name="Sikorski M.M."/>
            <person name="Handschuh L.A."/>
            <person name="Biesiadka J."/>
            <person name="Legocki A.B."/>
        </authorList>
    </citation>
    <scope>NUCLEOTIDE SEQUENCE [MRNA]</scope>
    <source>
        <strain>cv. Ventus</strain>
        <tissue>Root</tissue>
    </source>
</reference>
<reference key="2">
    <citation type="submission" date="2004-08" db="EMBL/GenBank/DDBJ databases">
        <title>Yellow lupine pathogenesis-related protein of class 10.</title>
        <authorList>
            <person name="Handschuh L."/>
            <person name="Sikorski M.M."/>
        </authorList>
    </citation>
    <scope>NUCLEOTIDE SEQUENCE [GENOMIC DNA]</scope>
</reference>
<reference key="3">
    <citation type="journal article" date="2013" name="Acta Crystallogr. D">
        <title>The landscape of cytokinin binding by a plant nodulin.</title>
        <authorList>
            <person name="Ruszkowski M."/>
            <person name="Szpotkowski K."/>
            <person name="Sikorski M."/>
            <person name="Jaskolski M."/>
        </authorList>
    </citation>
    <scope>REVIEW</scope>
</reference>
<reference key="4">
    <citation type="journal article" date="2005" name="Acta Crystallogr. D">
        <title>Structure of a yellow lupin pathogenesis-related PR-10 protein belonging to a novel subclass.</title>
        <authorList>
            <person name="Pasternak O."/>
            <person name="Biesiadka J."/>
            <person name="Dolot R."/>
            <person name="Handschuh L."/>
            <person name="Bujacz G."/>
            <person name="Sikorski M.M."/>
            <person name="Jaskolski M."/>
        </authorList>
    </citation>
    <scope>X-RAY CRYSTALLOGRAPHY (1.90 ANGSTROMS) OF 2-158</scope>
</reference>
<feature type="chain" id="PRO_0000445929" description="Class 10 plant pathogenesis-related protein 2A">
    <location>
        <begin position="1"/>
        <end position="158"/>
    </location>
</feature>
<feature type="binding site" evidence="2">
    <location>
        <position position="8"/>
    </location>
    <ligand>
        <name>trans-zeatin</name>
        <dbReference type="ChEBI" id="CHEBI:16522"/>
        <label>1</label>
    </ligand>
</feature>
<feature type="binding site" evidence="2">
    <location>
        <position position="32"/>
    </location>
    <ligand>
        <name>Ca(2+)</name>
        <dbReference type="ChEBI" id="CHEBI:29108"/>
    </ligand>
</feature>
<feature type="binding site" evidence="2">
    <location>
        <position position="35"/>
    </location>
    <ligand>
        <name>Ca(2+)</name>
        <dbReference type="ChEBI" id="CHEBI:29108"/>
    </ligand>
</feature>
<feature type="binding site" evidence="2">
    <location>
        <position position="38"/>
    </location>
    <ligand>
        <name>Ca(2+)</name>
        <dbReference type="ChEBI" id="CHEBI:29108"/>
    </ligand>
</feature>
<feature type="binding site" evidence="2">
    <location>
        <position position="60"/>
    </location>
    <ligand>
        <name>trans-zeatin</name>
        <dbReference type="ChEBI" id="CHEBI:16522"/>
        <label>2</label>
    </ligand>
</feature>
<feature type="binding site" evidence="2">
    <location>
        <position position="69"/>
    </location>
    <ligand>
        <name>trans-zeatin</name>
        <dbReference type="ChEBI" id="CHEBI:16522"/>
        <label>3</label>
    </ligand>
</feature>
<feature type="binding site" evidence="2">
    <location>
        <position position="81"/>
    </location>
    <ligand>
        <name>trans-zeatin</name>
        <dbReference type="ChEBI" id="CHEBI:16522"/>
        <label>3</label>
    </ligand>
</feature>
<feature type="binding site" evidence="2">
    <location>
        <position position="83"/>
    </location>
    <ligand>
        <name>trans-zeatin</name>
        <dbReference type="ChEBI" id="CHEBI:16522"/>
        <label>1</label>
    </ligand>
</feature>
<feature type="strand" evidence="6">
    <location>
        <begin position="3"/>
        <end position="14"/>
    </location>
</feature>
<feature type="helix" evidence="6">
    <location>
        <begin position="16"/>
        <end position="25"/>
    </location>
</feature>
<feature type="helix" evidence="6">
    <location>
        <begin position="27"/>
        <end position="34"/>
    </location>
</feature>
<feature type="strand" evidence="6">
    <location>
        <begin position="38"/>
        <end position="49"/>
    </location>
</feature>
<feature type="strand" evidence="6">
    <location>
        <begin position="53"/>
        <end position="60"/>
    </location>
</feature>
<feature type="strand" evidence="6">
    <location>
        <begin position="63"/>
        <end position="75"/>
    </location>
</feature>
<feature type="helix" evidence="6">
    <location>
        <begin position="76"/>
        <end position="78"/>
    </location>
</feature>
<feature type="strand" evidence="6">
    <location>
        <begin position="80"/>
        <end position="88"/>
    </location>
</feature>
<feature type="strand" evidence="6">
    <location>
        <begin position="95"/>
        <end position="106"/>
    </location>
</feature>
<feature type="strand" evidence="6">
    <location>
        <begin position="110"/>
        <end position="126"/>
    </location>
</feature>
<feature type="helix" evidence="6">
    <location>
        <begin position="130"/>
        <end position="141"/>
    </location>
</feature>
<feature type="turn" evidence="6">
    <location>
        <begin position="142"/>
        <end position="144"/>
    </location>
</feature>
<feature type="helix" evidence="6">
    <location>
        <begin position="145"/>
        <end position="152"/>
    </location>
</feature>
<feature type="helix" evidence="6">
    <location>
        <begin position="155"/>
        <end position="157"/>
    </location>
</feature>
<comment type="function">
    <text evidence="1 2">Class II ribonuclease (RNase) (By similarity). Binds to cytokinins (By similarity). Interacts with melatonin (By similarity).</text>
</comment>
<comment type="subcellular location">
    <subcellularLocation>
        <location evidence="2">Cytoplasm</location>
        <location evidence="2">Cytosol</location>
    </subcellularLocation>
</comment>
<comment type="allergen">
    <text evidence="5">Causes an allergic reaction in human.</text>
</comment>
<comment type="similarity">
    <text evidence="5">Belongs to the BetVI family.</text>
</comment>
<gene>
    <name evidence="3" type="primary">PR10.2A</name>
</gene>
<organism>
    <name type="scientific">Lupinus luteus</name>
    <name type="common">European yellow lupine</name>
    <dbReference type="NCBI Taxonomy" id="3873"/>
    <lineage>
        <taxon>Eukaryota</taxon>
        <taxon>Viridiplantae</taxon>
        <taxon>Streptophyta</taxon>
        <taxon>Embryophyta</taxon>
        <taxon>Tracheophyta</taxon>
        <taxon>Spermatophyta</taxon>
        <taxon>Magnoliopsida</taxon>
        <taxon>eudicotyledons</taxon>
        <taxon>Gunneridae</taxon>
        <taxon>Pentapetalae</taxon>
        <taxon>rosids</taxon>
        <taxon>fabids</taxon>
        <taxon>Fabales</taxon>
        <taxon>Fabaceae</taxon>
        <taxon>Papilionoideae</taxon>
        <taxon>50 kb inversion clade</taxon>
        <taxon>genistoids sensu lato</taxon>
        <taxon>core genistoids</taxon>
        <taxon>Genisteae</taxon>
        <taxon>Lupinus</taxon>
    </lineage>
</organism>
<sequence>MGVFTFEDESTSTIAPARLYKALVKDADAIIPKAVEAIQSIETVEGNGGPGTIKKLTLIEGGETKYVLHKIEAVDEANLRYNYSIVGGVGLPDTIEKISFETKLVEGANGGSIGKVTIKIETKGDAQPNEEEGKAAKARGDAFFKAIENYLSAHPEYN</sequence>
<accession>Q9LLQ3</accession>
<name>P102A_LUPLU</name>
<protein>
    <recommendedName>
        <fullName evidence="3">Class 10 plant pathogenesis-related protein 2A</fullName>
        <shortName evidence="3">LlPR10.2a</shortName>
        <shortName evidence="4">Ypr-10.2a</shortName>
        <ecNumber evidence="1">3.1.27.-</ecNumber>
    </recommendedName>
    <allergenName evidence="5">Lup l 4</allergenName>
</protein>
<evidence type="ECO:0000250" key="1">
    <source>
        <dbReference type="UniProtKB" id="P52779"/>
    </source>
</evidence>
<evidence type="ECO:0000250" key="2">
    <source>
        <dbReference type="UniProtKB" id="Q9LLQ2"/>
    </source>
</evidence>
<evidence type="ECO:0000303" key="3">
    <source ref="1"/>
</evidence>
<evidence type="ECO:0000303" key="4">
    <source ref="2"/>
</evidence>
<evidence type="ECO:0000305" key="5"/>
<evidence type="ECO:0007829" key="6">
    <source>
        <dbReference type="PDB" id="1XDF"/>
    </source>
</evidence>
<dbReference type="EC" id="3.1.27.-" evidence="1"/>
<dbReference type="EMBL" id="AF170091">
    <property type="protein sequence ID" value="AAF77633.1"/>
    <property type="molecule type" value="mRNA"/>
</dbReference>
<dbReference type="EMBL" id="AY729802">
    <property type="protein sequence ID" value="AAU43882.1"/>
    <property type="molecule type" value="Genomic_DNA"/>
</dbReference>
<dbReference type="PDB" id="1XDF">
    <property type="method" value="X-ray"/>
    <property type="resolution" value="1.90 A"/>
    <property type="chains" value="A/B=2-158"/>
</dbReference>
<dbReference type="PDBsum" id="1XDF"/>
<dbReference type="SMR" id="Q9LLQ3"/>
<dbReference type="Allergome" id="9727">
    <property type="allergen name" value="Lup l 4"/>
</dbReference>
<dbReference type="EvolutionaryTrace" id="Q9LLQ3"/>
<dbReference type="GO" id="GO:0005829">
    <property type="term" value="C:cytosol"/>
    <property type="evidence" value="ECO:0007669"/>
    <property type="project" value="UniProtKB-SubCell"/>
</dbReference>
<dbReference type="GO" id="GO:0005634">
    <property type="term" value="C:nucleus"/>
    <property type="evidence" value="ECO:0007669"/>
    <property type="project" value="TreeGrafter"/>
</dbReference>
<dbReference type="GO" id="GO:0010427">
    <property type="term" value="F:abscisic acid binding"/>
    <property type="evidence" value="ECO:0007669"/>
    <property type="project" value="InterPro"/>
</dbReference>
<dbReference type="GO" id="GO:0005509">
    <property type="term" value="F:calcium ion binding"/>
    <property type="evidence" value="ECO:0000250"/>
    <property type="project" value="UniProtKB"/>
</dbReference>
<dbReference type="GO" id="GO:0044373">
    <property type="term" value="F:cytokinin binding"/>
    <property type="evidence" value="ECO:0000250"/>
    <property type="project" value="UniProtKB"/>
</dbReference>
<dbReference type="GO" id="GO:1904408">
    <property type="term" value="F:melatonin binding"/>
    <property type="evidence" value="ECO:0000250"/>
    <property type="project" value="UniProtKB"/>
</dbReference>
<dbReference type="GO" id="GO:0004864">
    <property type="term" value="F:protein phosphatase inhibitor activity"/>
    <property type="evidence" value="ECO:0007669"/>
    <property type="project" value="InterPro"/>
</dbReference>
<dbReference type="GO" id="GO:0004540">
    <property type="term" value="F:RNA nuclease activity"/>
    <property type="evidence" value="ECO:0000250"/>
    <property type="project" value="UniProtKB"/>
</dbReference>
<dbReference type="GO" id="GO:0038023">
    <property type="term" value="F:signaling receptor activity"/>
    <property type="evidence" value="ECO:0007669"/>
    <property type="project" value="InterPro"/>
</dbReference>
<dbReference type="GO" id="GO:0009738">
    <property type="term" value="P:abscisic acid-activated signaling pathway"/>
    <property type="evidence" value="ECO:0007669"/>
    <property type="project" value="InterPro"/>
</dbReference>
<dbReference type="GO" id="GO:0006952">
    <property type="term" value="P:defense response"/>
    <property type="evidence" value="ECO:0007669"/>
    <property type="project" value="UniProtKB-KW"/>
</dbReference>
<dbReference type="CDD" id="cd07816">
    <property type="entry name" value="Bet_v1-like"/>
    <property type="match status" value="1"/>
</dbReference>
<dbReference type="FunFam" id="3.30.530.20:FF:000007">
    <property type="entry name" value="Major pollen allergen Bet v 1-A"/>
    <property type="match status" value="1"/>
</dbReference>
<dbReference type="Gene3D" id="3.30.530.20">
    <property type="match status" value="1"/>
</dbReference>
<dbReference type="InterPro" id="IPR000916">
    <property type="entry name" value="Bet_v_I/MLP"/>
</dbReference>
<dbReference type="InterPro" id="IPR024949">
    <property type="entry name" value="Bet_v_I_allergen"/>
</dbReference>
<dbReference type="InterPro" id="IPR050279">
    <property type="entry name" value="Plant_def-hormone_signal"/>
</dbReference>
<dbReference type="InterPro" id="IPR023393">
    <property type="entry name" value="START-like_dom_sf"/>
</dbReference>
<dbReference type="PANTHER" id="PTHR31213">
    <property type="entry name" value="OS08G0374000 PROTEIN-RELATED"/>
    <property type="match status" value="1"/>
</dbReference>
<dbReference type="PANTHER" id="PTHR31213:SF55">
    <property type="entry name" value="STRESS-INDUCED PROTEIN SAM22"/>
    <property type="match status" value="1"/>
</dbReference>
<dbReference type="Pfam" id="PF00407">
    <property type="entry name" value="Bet_v_1"/>
    <property type="match status" value="1"/>
</dbReference>
<dbReference type="PRINTS" id="PR00634">
    <property type="entry name" value="BETALLERGEN"/>
</dbReference>
<dbReference type="SUPFAM" id="SSF55961">
    <property type="entry name" value="Bet v1-like"/>
    <property type="match status" value="1"/>
</dbReference>
<keyword id="KW-0002">3D-structure</keyword>
<keyword id="KW-0020">Allergen</keyword>
<keyword id="KW-0106">Calcium</keyword>
<keyword id="KW-0963">Cytoplasm</keyword>
<keyword id="KW-0378">Hydrolase</keyword>
<keyword id="KW-0479">Metal-binding</keyword>
<keyword id="KW-0540">Nuclease</keyword>
<keyword id="KW-0568">Pathogenesis-related protein</keyword>
<keyword id="KW-0611">Plant defense</keyword>
<proteinExistence type="evidence at protein level"/>